<sequence length="581" mass="66563">MADPDSYRSSITSRPAFNRTVTSSTQNYGTPASGNRVLKIVTETHTSSVASGLSPYGQGAASTIRDDREREKKEITELNDRLASYIGKVRFLAAQNRKLEADLNVLQSRFGKSTGSVKIMYEMEITTATNVVKETGKDHEEAEKEIGKIKDQLDELRKKFEEAQKGRAEDRLKIDELLVTLSNLEAEINLLKRRIALLEEEVARLKKENFRLTSELQRVRSELDQETLLRIDNQNKVTTILEEIDFMKRGFETELKDLQAQAARDTTSENREYFKNELMNSIRDIRAEYDRFMAGNRNDLESWSQIRVQEINTQTNRQNAEINHKRDEVKRLHSQVSELKSKHAELAARNGLLEKQLEDLNYQLEDDQRSYEAALNDKDAQVRKLREECQALLVELQMLLDTKQTLDGELKVYRRMLEGNSEENGLRQLVEKVVRTSAINEEVDTETMRVVKGEHSSRTSYQRSAKGNVSIKEVSPEGKFVILENTHRDKEEPLGDWKLKRKIDGKREIVFTFPSDYILHPVQTVKIFARGNGVANPPEVLVFEGDDTFGAGANVQTILYNNSGEERATHMQRQSQQTTTS</sequence>
<reference key="1">
    <citation type="journal article" date="1994" name="EMBO J.">
        <title>Eight genes and alternative RNA processing pathways generate an unexpectedly large diversity of cytoplasmic intermediate filament proteins in the nematode Caenorhabditis elegans.</title>
        <authorList>
            <person name="Dodemont H."/>
            <person name="Riemer D."/>
            <person name="Ledger T.N."/>
            <person name="Weber K."/>
        </authorList>
    </citation>
    <scope>NUCLEOTIDE SEQUENCE [GENOMIC DNA]</scope>
    <source>
        <strain>Bristol N2</strain>
    </source>
</reference>
<reference key="2">
    <citation type="journal article" date="1998" name="Science">
        <title>Genome sequence of the nematode C. elegans: a platform for investigating biology.</title>
        <authorList>
            <consortium name="The C. elegans sequencing consortium"/>
        </authorList>
    </citation>
    <scope>NUCLEOTIDE SEQUENCE [LARGE SCALE GENOMIC DNA]</scope>
    <source>
        <strain>Bristol N2</strain>
    </source>
</reference>
<reference key="3">
    <citation type="journal article" date="2001" name="Proc. Natl. Acad. Sci. U.S.A.">
        <title>Essential roles for four cytoplasmic intermediate filament proteins in Caenorhabditis elegans development.</title>
        <authorList>
            <person name="Karabinos A."/>
            <person name="Schmidt H."/>
            <person name="Harborth J."/>
            <person name="Schnabel R."/>
            <person name="Weber K."/>
        </authorList>
    </citation>
    <scope>FUNCTION</scope>
    <scope>SUBCELLULAR LOCATION</scope>
    <scope>TISSUE SPECIFICITY</scope>
</reference>
<reference key="4">
    <citation type="journal article" date="2003" name="J. Mol. Biol.">
        <title>In vivo and in vitro evidence that the four essential intermediate filament (IF) proteins A1, A2, A3 and B1 of the nematode Caenorhabditis elegans form an obligate heteropolymeric IF system.</title>
        <authorList>
            <person name="Karabinos A."/>
            <person name="Schulze E."/>
            <person name="Schuenemann J."/>
            <person name="Parry D.A.D."/>
            <person name="Weber K."/>
        </authorList>
    </citation>
    <scope>INTERACTION WITH IFB-1</scope>
</reference>
<reference key="5">
    <citation type="journal article" date="2004" name="Dev. Biol.">
        <title>Intermediate filaments are required for C. elegans epidermal elongation.</title>
        <authorList>
            <person name="Woo W.-M."/>
            <person name="Goncharov A."/>
            <person name="Jin Y."/>
            <person name="Chisholm A.D."/>
        </authorList>
    </citation>
    <scope>FUNCTION</scope>
</reference>
<proteinExistence type="evidence at protein level"/>
<gene>
    <name type="primary">ifa-3</name>
    <name type="ORF">F52E10.5</name>
</gene>
<accession>Q21065</accession>
<accession>Q20671</accession>
<accession>Q94367</accession>
<comment type="function">
    <text evidence="4 5">Cytoplasmic intermediate filaments provide mechanical strength to cells. Essential protein, involved in attachment structures in epidermal cells that connect muscles to the external cuticle. Required for epidermal morphogenesis in embryos. Probable component of embryonic epidermal attachment structures.</text>
</comment>
<comment type="subunit">
    <text>Forms some heteromeric filaments with ifb-1.</text>
</comment>
<comment type="subcellular location">
    <subcellularLocation>
        <location evidence="4">Cytoplasm</location>
    </subcellularLocation>
</comment>
<comment type="tissue specificity">
    <text evidence="4">Expressed in the embryonic and larval hypodermis. Also expressed in the ventral nerve cord of larvae.</text>
</comment>
<comment type="developmental stage">
    <text>Expressed in embryos and larvae. Not expressed in adults.</text>
</comment>
<comment type="similarity">
    <text evidence="2">Belongs to the intermediate filament family.</text>
</comment>
<protein>
    <recommendedName>
        <fullName>Intermediate filament protein ifa-3</fullName>
    </recommendedName>
    <alternativeName>
        <fullName>Cel IF A3</fullName>
    </alternativeName>
    <alternativeName>
        <fullName>Intermediate filament protein A3</fullName>
        <shortName>IF-A3</shortName>
    </alternativeName>
</protein>
<feature type="chain" id="PRO_0000063836" description="Intermediate filament protein ifa-3">
    <location>
        <begin position="1"/>
        <end position="581"/>
    </location>
</feature>
<feature type="domain" description="IF rod" evidence="2">
    <location>
        <begin position="71"/>
        <end position="424"/>
    </location>
</feature>
<feature type="domain" description="LTD" evidence="1">
    <location>
        <begin position="457"/>
        <end position="574"/>
    </location>
</feature>
<feature type="region of interest" description="Head">
    <location>
        <begin position="1"/>
        <end position="74"/>
    </location>
</feature>
<feature type="region of interest" description="Disordered" evidence="3">
    <location>
        <begin position="1"/>
        <end position="33"/>
    </location>
</feature>
<feature type="region of interest" description="Coil 1A">
    <location>
        <begin position="75"/>
        <end position="106"/>
    </location>
</feature>
<feature type="region of interest" description="Linker 1">
    <location>
        <begin position="107"/>
        <end position="120"/>
    </location>
</feature>
<feature type="region of interest" description="Coil 1B">
    <location>
        <begin position="121"/>
        <end position="258"/>
    </location>
</feature>
<feature type="region of interest" description="Linker 12">
    <location>
        <begin position="259"/>
        <end position="276"/>
    </location>
</feature>
<feature type="region of interest" description="Coil 2">
    <location>
        <begin position="277"/>
        <end position="424"/>
    </location>
</feature>
<feature type="region of interest" description="Tail">
    <location>
        <begin position="425"/>
        <end position="578"/>
    </location>
</feature>
<feature type="compositionally biased region" description="Polar residues" evidence="3">
    <location>
        <begin position="7"/>
        <end position="33"/>
    </location>
</feature>
<organism>
    <name type="scientific">Caenorhabditis elegans</name>
    <dbReference type="NCBI Taxonomy" id="6239"/>
    <lineage>
        <taxon>Eukaryota</taxon>
        <taxon>Metazoa</taxon>
        <taxon>Ecdysozoa</taxon>
        <taxon>Nematoda</taxon>
        <taxon>Chromadorea</taxon>
        <taxon>Rhabditida</taxon>
        <taxon>Rhabditina</taxon>
        <taxon>Rhabditomorpha</taxon>
        <taxon>Rhabditoidea</taxon>
        <taxon>Rhabditidae</taxon>
        <taxon>Peloderinae</taxon>
        <taxon>Caenorhabditis</taxon>
    </lineage>
</organism>
<dbReference type="EMBL" id="X70831">
    <property type="protein sequence ID" value="CAA50179.1"/>
    <property type="molecule type" value="Genomic_DNA"/>
</dbReference>
<dbReference type="EMBL" id="Z54282">
    <property type="protein sequence ID" value="CAA91057.4"/>
    <property type="molecule type" value="Genomic_DNA"/>
</dbReference>
<dbReference type="EMBL" id="Z81140">
    <property type="protein sequence ID" value="CAA91057.4"/>
    <property type="status" value="JOINED"/>
    <property type="molecule type" value="Genomic_DNA"/>
</dbReference>
<dbReference type="PIR" id="S46327">
    <property type="entry name" value="S46327"/>
</dbReference>
<dbReference type="PIR" id="T22507">
    <property type="entry name" value="T22507"/>
</dbReference>
<dbReference type="RefSeq" id="NP_510649.3">
    <property type="nucleotide sequence ID" value="NM_078248.7"/>
</dbReference>
<dbReference type="SMR" id="Q21065"/>
<dbReference type="BioGRID" id="46585">
    <property type="interactions" value="2"/>
</dbReference>
<dbReference type="FunCoup" id="Q21065">
    <property type="interactions" value="11"/>
</dbReference>
<dbReference type="STRING" id="6239.F52E10.5.1"/>
<dbReference type="iPTMnet" id="Q21065"/>
<dbReference type="PaxDb" id="6239-F52E10.5"/>
<dbReference type="PeptideAtlas" id="Q21065"/>
<dbReference type="EnsemblMetazoa" id="F52E10.5.1">
    <property type="protein sequence ID" value="F52E10.5.1"/>
    <property type="gene ID" value="WBGene00002051"/>
</dbReference>
<dbReference type="GeneID" id="181699"/>
<dbReference type="KEGG" id="cel:CELE_F52E10.5"/>
<dbReference type="UCSC" id="F52E10.5">
    <property type="organism name" value="c. elegans"/>
</dbReference>
<dbReference type="AGR" id="WB:WBGene00002051"/>
<dbReference type="CTD" id="181699"/>
<dbReference type="WormBase" id="F52E10.5">
    <property type="protein sequence ID" value="CE34875"/>
    <property type="gene ID" value="WBGene00002051"/>
    <property type="gene designation" value="ifa-3"/>
</dbReference>
<dbReference type="eggNOG" id="KOG0977">
    <property type="taxonomic scope" value="Eukaryota"/>
</dbReference>
<dbReference type="GeneTree" id="ENSGT00970000196730"/>
<dbReference type="HOGENOM" id="CLU_012560_7_0_1"/>
<dbReference type="InParanoid" id="Q21065"/>
<dbReference type="OMA" id="KNECESW"/>
<dbReference type="OrthoDB" id="2441647at2759"/>
<dbReference type="PhylomeDB" id="Q21065"/>
<dbReference type="Reactome" id="R-CEL-2559584">
    <property type="pathway name" value="Formation of Senescence-Associated Heterochromatin Foci (SAHF)"/>
</dbReference>
<dbReference type="Reactome" id="R-CEL-4419969">
    <property type="pathway name" value="Depolymerization of the Nuclear Lamina"/>
</dbReference>
<dbReference type="Reactome" id="R-CEL-9013405">
    <property type="pathway name" value="RHOD GTPase cycle"/>
</dbReference>
<dbReference type="Reactome" id="R-CEL-9035034">
    <property type="pathway name" value="RHOF GTPase cycle"/>
</dbReference>
<dbReference type="PRO" id="PR:Q21065"/>
<dbReference type="Proteomes" id="UP000001940">
    <property type="component" value="Chromosome X"/>
</dbReference>
<dbReference type="Bgee" id="WBGene00002051">
    <property type="expression patterns" value="Expressed in embryo and 3 other cell types or tissues"/>
</dbReference>
<dbReference type="GO" id="GO:0005737">
    <property type="term" value="C:cytoplasm"/>
    <property type="evidence" value="ECO:0007669"/>
    <property type="project" value="UniProtKB-SubCell"/>
</dbReference>
<dbReference type="GO" id="GO:0005882">
    <property type="term" value="C:intermediate filament"/>
    <property type="evidence" value="ECO:0007669"/>
    <property type="project" value="UniProtKB-KW"/>
</dbReference>
<dbReference type="GO" id="GO:0005635">
    <property type="term" value="C:nuclear envelope"/>
    <property type="evidence" value="ECO:0000318"/>
    <property type="project" value="GO_Central"/>
</dbReference>
<dbReference type="GO" id="GO:0005652">
    <property type="term" value="C:nuclear lamina"/>
    <property type="evidence" value="ECO:0000318"/>
    <property type="project" value="GO_Central"/>
</dbReference>
<dbReference type="GO" id="GO:0005200">
    <property type="term" value="F:structural constituent of cytoskeleton"/>
    <property type="evidence" value="ECO:0000318"/>
    <property type="project" value="GO_Central"/>
</dbReference>
<dbReference type="GO" id="GO:0031507">
    <property type="term" value="P:heterochromatin formation"/>
    <property type="evidence" value="ECO:0000318"/>
    <property type="project" value="GO_Central"/>
</dbReference>
<dbReference type="GO" id="GO:0006998">
    <property type="term" value="P:nuclear envelope organization"/>
    <property type="evidence" value="ECO:0000318"/>
    <property type="project" value="GO_Central"/>
</dbReference>
<dbReference type="GO" id="GO:0007097">
    <property type="term" value="P:nuclear migration"/>
    <property type="evidence" value="ECO:0000318"/>
    <property type="project" value="GO_Central"/>
</dbReference>
<dbReference type="GO" id="GO:0051664">
    <property type="term" value="P:nuclear pore localization"/>
    <property type="evidence" value="ECO:0000318"/>
    <property type="project" value="GO_Central"/>
</dbReference>
<dbReference type="GO" id="GO:0090435">
    <property type="term" value="P:protein localization to nuclear envelope"/>
    <property type="evidence" value="ECO:0000318"/>
    <property type="project" value="GO_Central"/>
</dbReference>
<dbReference type="FunFam" id="1.20.5.1160:FF:000016">
    <property type="entry name" value="Intermediate filament protein A"/>
    <property type="match status" value="1"/>
</dbReference>
<dbReference type="FunFam" id="2.60.40.1260:FF:000003">
    <property type="entry name" value="Intermediate filament protein A"/>
    <property type="match status" value="1"/>
</dbReference>
<dbReference type="FunFam" id="1.20.5.170:FF:000058">
    <property type="entry name" value="Intermediate filament protein B"/>
    <property type="match status" value="1"/>
</dbReference>
<dbReference type="Gene3D" id="1.20.5.170">
    <property type="match status" value="1"/>
</dbReference>
<dbReference type="Gene3D" id="2.60.40.1260">
    <property type="entry name" value="Lamin Tail domain"/>
    <property type="match status" value="1"/>
</dbReference>
<dbReference type="Gene3D" id="1.20.5.500">
    <property type="entry name" value="Single helix bin"/>
    <property type="match status" value="1"/>
</dbReference>
<dbReference type="Gene3D" id="1.20.5.1160">
    <property type="entry name" value="Vasodilator-stimulated phosphoprotein"/>
    <property type="match status" value="1"/>
</dbReference>
<dbReference type="InterPro" id="IPR039008">
    <property type="entry name" value="IF_rod_dom"/>
</dbReference>
<dbReference type="InterPro" id="IPR016451">
    <property type="entry name" value="Intermed_filament_ifa/ifb"/>
</dbReference>
<dbReference type="InterPro" id="IPR001322">
    <property type="entry name" value="Lamin_tail_dom"/>
</dbReference>
<dbReference type="InterPro" id="IPR036415">
    <property type="entry name" value="Lamin_tail_dom_sf"/>
</dbReference>
<dbReference type="PANTHER" id="PTHR45721:SF9">
    <property type="entry name" value="INTERMEDIATE FILAMENT PROTEIN IFA-2-RELATED"/>
    <property type="match status" value="1"/>
</dbReference>
<dbReference type="PANTHER" id="PTHR45721">
    <property type="entry name" value="LAMIN DM0-RELATED"/>
    <property type="match status" value="1"/>
</dbReference>
<dbReference type="Pfam" id="PF00038">
    <property type="entry name" value="Filament"/>
    <property type="match status" value="1"/>
</dbReference>
<dbReference type="Pfam" id="PF00932">
    <property type="entry name" value="LTD"/>
    <property type="match status" value="1"/>
</dbReference>
<dbReference type="PIRSF" id="PIRSF005546">
    <property type="entry name" value="Intermed_filamnt_Ifb-2"/>
    <property type="match status" value="1"/>
</dbReference>
<dbReference type="SMART" id="SM01391">
    <property type="entry name" value="Filament"/>
    <property type="match status" value="1"/>
</dbReference>
<dbReference type="SUPFAM" id="SSF64593">
    <property type="entry name" value="Intermediate filament protein, coiled coil region"/>
    <property type="match status" value="2"/>
</dbReference>
<dbReference type="SUPFAM" id="SSF74853">
    <property type="entry name" value="Lamin A/C globular tail domain"/>
    <property type="match status" value="1"/>
</dbReference>
<dbReference type="PROSITE" id="PS51842">
    <property type="entry name" value="IF_ROD_2"/>
    <property type="match status" value="1"/>
</dbReference>
<dbReference type="PROSITE" id="PS51841">
    <property type="entry name" value="LTD"/>
    <property type="match status" value="1"/>
</dbReference>
<keyword id="KW-0175">Coiled coil</keyword>
<keyword id="KW-0963">Cytoplasm</keyword>
<keyword id="KW-0403">Intermediate filament</keyword>
<keyword id="KW-1185">Reference proteome</keyword>
<evidence type="ECO:0000255" key="1">
    <source>
        <dbReference type="PROSITE-ProRule" id="PRU01187"/>
    </source>
</evidence>
<evidence type="ECO:0000255" key="2">
    <source>
        <dbReference type="PROSITE-ProRule" id="PRU01188"/>
    </source>
</evidence>
<evidence type="ECO:0000256" key="3">
    <source>
        <dbReference type="SAM" id="MobiDB-lite"/>
    </source>
</evidence>
<evidence type="ECO:0000269" key="4">
    <source>
    </source>
</evidence>
<evidence type="ECO:0000269" key="5">
    <source>
    </source>
</evidence>
<name>IFA3_CAEEL</name>